<comment type="function">
    <text>Hydrolyzes sphingomyelin in addition to phosphatidylcholine.</text>
</comment>
<comment type="catalytic activity">
    <reaction>
        <text>a 1,2-diacyl-sn-glycero-3-phosphocholine + H2O = phosphocholine + a 1,2-diacyl-sn-glycerol + H(+)</text>
        <dbReference type="Rhea" id="RHEA:10604"/>
        <dbReference type="ChEBI" id="CHEBI:15377"/>
        <dbReference type="ChEBI" id="CHEBI:15378"/>
        <dbReference type="ChEBI" id="CHEBI:17815"/>
        <dbReference type="ChEBI" id="CHEBI:57643"/>
        <dbReference type="ChEBI" id="CHEBI:295975"/>
        <dbReference type="EC" id="3.1.4.3"/>
    </reaction>
</comment>
<comment type="PTM">
    <text>Predicted to be exported by the Tat system. The position of the signal peptide cleavage has not been experimentally proven.</text>
</comment>
<comment type="similarity">
    <text evidence="2">Belongs to the bacterial phospholipase C family.</text>
</comment>
<proteinExistence type="inferred from homology"/>
<dbReference type="EC" id="3.1.4.3"/>
<dbReference type="EMBL" id="M13047">
    <property type="protein sequence ID" value="AAA25966.1"/>
    <property type="molecule type" value="Genomic_DNA"/>
</dbReference>
<dbReference type="EMBL" id="AE004091">
    <property type="protein sequence ID" value="AAG04233.1"/>
    <property type="molecule type" value="Genomic_DNA"/>
</dbReference>
<dbReference type="PIR" id="A26391">
    <property type="entry name" value="A26391"/>
</dbReference>
<dbReference type="PIR" id="B83540">
    <property type="entry name" value="B83540"/>
</dbReference>
<dbReference type="RefSeq" id="NP_249535.1">
    <property type="nucleotide sequence ID" value="NC_002516.2"/>
</dbReference>
<dbReference type="RefSeq" id="WP_003114225.1">
    <property type="nucleotide sequence ID" value="NZ_QZGE01000007.1"/>
</dbReference>
<dbReference type="SMR" id="P06200"/>
<dbReference type="STRING" id="208964.PA0844"/>
<dbReference type="PaxDb" id="208964-PA0844"/>
<dbReference type="GeneID" id="879296"/>
<dbReference type="KEGG" id="pae:PA0844"/>
<dbReference type="PATRIC" id="fig|208964.12.peg.876"/>
<dbReference type="PseudoCAP" id="PA0844"/>
<dbReference type="HOGENOM" id="CLU_008770_1_0_6"/>
<dbReference type="InParanoid" id="P06200"/>
<dbReference type="OrthoDB" id="9770871at2"/>
<dbReference type="PhylomeDB" id="P06200"/>
<dbReference type="BioCyc" id="PAER208964:G1FZ6-859-MONOMER"/>
<dbReference type="PHI-base" id="PHI:12178"/>
<dbReference type="Proteomes" id="UP000002438">
    <property type="component" value="Chromosome"/>
</dbReference>
<dbReference type="GO" id="GO:0005615">
    <property type="term" value="C:extracellular space"/>
    <property type="evidence" value="ECO:0000314"/>
    <property type="project" value="PseudoCAP"/>
</dbReference>
<dbReference type="GO" id="GO:0016298">
    <property type="term" value="F:lipase activity"/>
    <property type="evidence" value="ECO:0000314"/>
    <property type="project" value="PseudoCAP"/>
</dbReference>
<dbReference type="GO" id="GO:0034480">
    <property type="term" value="F:phosphatidylcholine phospholipase C activity"/>
    <property type="evidence" value="ECO:0000314"/>
    <property type="project" value="PseudoCAP"/>
</dbReference>
<dbReference type="GO" id="GO:0033188">
    <property type="term" value="F:sphingomyelin synthase activity"/>
    <property type="evidence" value="ECO:0000314"/>
    <property type="project" value="PseudoCAP"/>
</dbReference>
<dbReference type="GO" id="GO:0090729">
    <property type="term" value="F:toxin activity"/>
    <property type="evidence" value="ECO:0007669"/>
    <property type="project" value="UniProtKB-KW"/>
</dbReference>
<dbReference type="GO" id="GO:0044179">
    <property type="term" value="P:hemolysis in another organism"/>
    <property type="evidence" value="ECO:0000314"/>
    <property type="project" value="PseudoCAP"/>
</dbReference>
<dbReference type="GO" id="GO:0016042">
    <property type="term" value="P:lipid catabolic process"/>
    <property type="evidence" value="ECO:0007669"/>
    <property type="project" value="InterPro"/>
</dbReference>
<dbReference type="GO" id="GO:0015628">
    <property type="term" value="P:protein secretion by the type II secretion system"/>
    <property type="evidence" value="ECO:0000314"/>
    <property type="project" value="PseudoCAP"/>
</dbReference>
<dbReference type="Gene3D" id="3.40.720.10">
    <property type="entry name" value="Alkaline Phosphatase, subunit A"/>
    <property type="match status" value="2"/>
</dbReference>
<dbReference type="InterPro" id="IPR017850">
    <property type="entry name" value="Alkaline_phosphatase_core_sf"/>
</dbReference>
<dbReference type="InterPro" id="IPR017767">
    <property type="entry name" value="PC-PLC"/>
</dbReference>
<dbReference type="InterPro" id="IPR007312">
    <property type="entry name" value="Phosphoesterase"/>
</dbReference>
<dbReference type="InterPro" id="IPR008475">
    <property type="entry name" value="PLipase_C_C"/>
</dbReference>
<dbReference type="InterPro" id="IPR006311">
    <property type="entry name" value="TAT_signal"/>
</dbReference>
<dbReference type="NCBIfam" id="TIGR03396">
    <property type="entry name" value="PC_PLC"/>
    <property type="match status" value="1"/>
</dbReference>
<dbReference type="PANTHER" id="PTHR31956:SF1">
    <property type="entry name" value="NON-SPECIFIC PHOSPHOLIPASE C1"/>
    <property type="match status" value="1"/>
</dbReference>
<dbReference type="PANTHER" id="PTHR31956">
    <property type="entry name" value="NON-SPECIFIC PHOSPHOLIPASE C4-RELATED"/>
    <property type="match status" value="1"/>
</dbReference>
<dbReference type="Pfam" id="PF04185">
    <property type="entry name" value="Phosphoesterase"/>
    <property type="match status" value="1"/>
</dbReference>
<dbReference type="Pfam" id="PF05506">
    <property type="entry name" value="PLipase_C_C"/>
    <property type="match status" value="2"/>
</dbReference>
<dbReference type="PROSITE" id="PS51318">
    <property type="entry name" value="TAT"/>
    <property type="match status" value="1"/>
</dbReference>
<feature type="signal peptide" description="Tat-type signal" evidence="1">
    <location>
        <begin position="1"/>
        <end position="38"/>
    </location>
</feature>
<feature type="chain" id="PRO_0000023939" description="Hemolytic phospholipase C">
    <location>
        <begin position="39"/>
        <end position="730"/>
    </location>
</feature>
<feature type="sequence conflict" description="In Ref. 1; AAA25966." evidence="2" ref="1">
    <original>V</original>
    <variation>L</variation>
    <location>
        <position position="436"/>
    </location>
</feature>
<feature type="sequence conflict" description="In Ref. 1; AAA25966." evidence="2" ref="1">
    <original>GHS</original>
    <variation>DTA</variation>
    <location>
        <begin position="550"/>
        <end position="552"/>
    </location>
</feature>
<feature type="sequence conflict" description="In Ref. 1." evidence="2" ref="1">
    <original>SVTVTPNPAYTRE</original>
    <variation>RRDGDAEPGLYPG</variation>
    <location>
        <begin position="654"/>
        <end position="666"/>
    </location>
</feature>
<organism>
    <name type="scientific">Pseudomonas aeruginosa (strain ATCC 15692 / DSM 22644 / CIP 104116 / JCM 14847 / LMG 12228 / 1C / PRS 101 / PAO1)</name>
    <dbReference type="NCBI Taxonomy" id="208964"/>
    <lineage>
        <taxon>Bacteria</taxon>
        <taxon>Pseudomonadati</taxon>
        <taxon>Pseudomonadota</taxon>
        <taxon>Gammaproteobacteria</taxon>
        <taxon>Pseudomonadales</taxon>
        <taxon>Pseudomonadaceae</taxon>
        <taxon>Pseudomonas</taxon>
    </lineage>
</organism>
<reference key="1">
    <citation type="journal article" date="1986" name="J. Bacteriol.">
        <title>Nucleotide sequence and expression of a phosphate-regulated gene encoding a secreted hemolysin of Pseudomonas aeruginosa.</title>
        <authorList>
            <person name="Pritchard A.E."/>
            <person name="Vasil M.L."/>
        </authorList>
    </citation>
    <scope>NUCLEOTIDE SEQUENCE [GENOMIC DNA]</scope>
</reference>
<reference key="2">
    <citation type="submission" date="1986-08" db="EMBL/GenBank/DDBJ databases">
        <authorList>
            <person name="Pritchard A.E."/>
        </authorList>
    </citation>
    <scope>SEQUENCE REVISION</scope>
</reference>
<reference key="3">
    <citation type="journal article" date="2000" name="Nature">
        <title>Complete genome sequence of Pseudomonas aeruginosa PAO1, an opportunistic pathogen.</title>
        <authorList>
            <person name="Stover C.K."/>
            <person name="Pham X.-Q.T."/>
            <person name="Erwin A.L."/>
            <person name="Mizoguchi S.D."/>
            <person name="Warrener P."/>
            <person name="Hickey M.J."/>
            <person name="Brinkman F.S.L."/>
            <person name="Hufnagle W.O."/>
            <person name="Kowalik D.J."/>
            <person name="Lagrou M."/>
            <person name="Garber R.L."/>
            <person name="Goltry L."/>
            <person name="Tolentino E."/>
            <person name="Westbrock-Wadman S."/>
            <person name="Yuan Y."/>
            <person name="Brody L.L."/>
            <person name="Coulter S.N."/>
            <person name="Folger K.R."/>
            <person name="Kas A."/>
            <person name="Larbig K."/>
            <person name="Lim R.M."/>
            <person name="Smith K.A."/>
            <person name="Spencer D.H."/>
            <person name="Wong G.K.-S."/>
            <person name="Wu Z."/>
            <person name="Paulsen I.T."/>
            <person name="Reizer J."/>
            <person name="Saier M.H. Jr."/>
            <person name="Hancock R.E.W."/>
            <person name="Lory S."/>
            <person name="Olson M.V."/>
        </authorList>
    </citation>
    <scope>NUCLEOTIDE SEQUENCE [LARGE SCALE GENOMIC DNA]</scope>
    <source>
        <strain>ATCC 15692 / DSM 22644 / CIP 104116 / JCM 14847 / LMG 12228 / 1C / PRS 101 / PAO1</strain>
    </source>
</reference>
<accession>P06200</accession>
<accession>Q9I597</accession>
<sequence>MTENWKFRRRTFLKHGAQAATLAGLSGLFPETLRRALAVEPDIRTGTIQDVQHVVILMQENRSFDHYFGHLNGVRGFNDPRALKRQDGKPVWYQNYKYEFSPYHWDTKVTSAQWVSSQNHEWSAFHAIWNQGRNDKWMAVQYPEAMGYFKRGDIPYYYALADAFTLCEAYHQSMMGPTNPNRLYHMSGRAAPSGDGKDVHIGNDMGDGTIGASGTVDWTTYPERLSAAGVDWRVYQEGGYRSSSLWYLYVDAYWKYRLQEQNNYDCNALAWFRNFKNAPRDSDLWQRAMLARGVDQLRKDVQENTLPQVSWIVAPYCYCEHPWWGPSFGEYYVTRVLEALTSNPEVWARTVFILNYDEGDGFYDHASAPVPPWKDGVGLSTVSTAGEIEVSSGLPIGLGHRVPLIAISPWSKGGKVSAEVFDHTSVLRFLERRFGVVEENISPWRRAVCGDLTSLFDFQGAGDTQVAPDLTNVPQSDARKEDAYWQQFYRPSPKYWSYEPKSLPGQEKGQRPTLAVPYQLHATLALDIAAGKLRLTLGNDGMSLPGNPQGHSAAVFQVQPREVGNPRFYTVTSYPVVQESGEELGRTLNDELDDLLDANGRYAFEVHGPNGFFREFHGNLHLAAQMARPEVSVTYQRNGNLQLNIRNLGRLPCSVTVTPNPAYTREGSRRYELEPNQAISEVWLLRSSQGWYDLSVTASNTEANYLRRLAGHVETGKPSRSDPLLDIAAT</sequence>
<keyword id="KW-0204">Cytolysis</keyword>
<keyword id="KW-0354">Hemolysis</keyword>
<keyword id="KW-0378">Hydrolase</keyword>
<keyword id="KW-1185">Reference proteome</keyword>
<keyword id="KW-0732">Signal</keyword>
<keyword id="KW-0800">Toxin</keyword>
<keyword id="KW-0843">Virulence</keyword>
<gene>
    <name type="primary">plcH</name>
    <name type="ordered locus">PA0844</name>
</gene>
<protein>
    <recommendedName>
        <fullName>Hemolytic phospholipase C</fullName>
        <ecNumber>3.1.4.3</ecNumber>
    </recommendedName>
    <alternativeName>
        <fullName>Heat-labile hemolysin</fullName>
    </alternativeName>
    <alternativeName>
        <fullName>PLC-H</fullName>
    </alternativeName>
    <alternativeName>
        <fullName>Phosphatidylcholine cholinephosphohydrolase</fullName>
    </alternativeName>
</protein>
<name>PHLC_PSEAE</name>
<evidence type="ECO:0000255" key="1">
    <source>
        <dbReference type="PROSITE-ProRule" id="PRU00648"/>
    </source>
</evidence>
<evidence type="ECO:0000305" key="2"/>